<evidence type="ECO:0000255" key="1">
    <source>
        <dbReference type="HAMAP-Rule" id="MF_01547"/>
    </source>
</evidence>
<evidence type="ECO:0000256" key="2">
    <source>
        <dbReference type="SAM" id="MobiDB-lite"/>
    </source>
</evidence>
<sequence length="210" mass="23176">MAKNKFSKDWIHQHINDPYVKLAQQKGYRARAAFKLLEILDAEKLMRRGDIVVDLGSAPGSWSQVARERLAGPGGAVDGRIIALDLLPMEPVAGVEFIQGDFREEAVLEQLARMVEGQPVDLVISDMAPNLSGVGVADSARIQHVCELALEFACAHLKPNGALIVKAFHGSGFSQIVQSYKQRFKRVVERKPKASRDKSSETFLVARDLK</sequence>
<gene>
    <name evidence="1" type="primary">rlmE</name>
    <name evidence="1" type="synonym">ftsJ</name>
    <name evidence="1" type="synonym">rrmJ</name>
    <name type="ordered locus">BPP2066</name>
</gene>
<organism>
    <name type="scientific">Bordetella parapertussis (strain 12822 / ATCC BAA-587 / NCTC 13253)</name>
    <dbReference type="NCBI Taxonomy" id="257311"/>
    <lineage>
        <taxon>Bacteria</taxon>
        <taxon>Pseudomonadati</taxon>
        <taxon>Pseudomonadota</taxon>
        <taxon>Betaproteobacteria</taxon>
        <taxon>Burkholderiales</taxon>
        <taxon>Alcaligenaceae</taxon>
        <taxon>Bordetella</taxon>
    </lineage>
</organism>
<reference key="1">
    <citation type="journal article" date="2003" name="Nat. Genet.">
        <title>Comparative analysis of the genome sequences of Bordetella pertussis, Bordetella parapertussis and Bordetella bronchiseptica.</title>
        <authorList>
            <person name="Parkhill J."/>
            <person name="Sebaihia M."/>
            <person name="Preston A."/>
            <person name="Murphy L.D."/>
            <person name="Thomson N.R."/>
            <person name="Harris D.E."/>
            <person name="Holden M.T.G."/>
            <person name="Churcher C.M."/>
            <person name="Bentley S.D."/>
            <person name="Mungall K.L."/>
            <person name="Cerdeno-Tarraga A.-M."/>
            <person name="Temple L."/>
            <person name="James K.D."/>
            <person name="Harris B."/>
            <person name="Quail M.A."/>
            <person name="Achtman M."/>
            <person name="Atkin R."/>
            <person name="Baker S."/>
            <person name="Basham D."/>
            <person name="Bason N."/>
            <person name="Cherevach I."/>
            <person name="Chillingworth T."/>
            <person name="Collins M."/>
            <person name="Cronin A."/>
            <person name="Davis P."/>
            <person name="Doggett J."/>
            <person name="Feltwell T."/>
            <person name="Goble A."/>
            <person name="Hamlin N."/>
            <person name="Hauser H."/>
            <person name="Holroyd S."/>
            <person name="Jagels K."/>
            <person name="Leather S."/>
            <person name="Moule S."/>
            <person name="Norberczak H."/>
            <person name="O'Neil S."/>
            <person name="Ormond D."/>
            <person name="Price C."/>
            <person name="Rabbinowitsch E."/>
            <person name="Rutter S."/>
            <person name="Sanders M."/>
            <person name="Saunders D."/>
            <person name="Seeger K."/>
            <person name="Sharp S."/>
            <person name="Simmonds M."/>
            <person name="Skelton J."/>
            <person name="Squares R."/>
            <person name="Squares S."/>
            <person name="Stevens K."/>
            <person name="Unwin L."/>
            <person name="Whitehead S."/>
            <person name="Barrell B.G."/>
            <person name="Maskell D.J."/>
        </authorList>
    </citation>
    <scope>NUCLEOTIDE SEQUENCE [LARGE SCALE GENOMIC DNA]</scope>
    <source>
        <strain>12822 / ATCC BAA-587 / NCTC 13253</strain>
    </source>
</reference>
<accession>Q7W8R6</accession>
<proteinExistence type="inferred from homology"/>
<dbReference type="EC" id="2.1.1.166" evidence="1"/>
<dbReference type="EMBL" id="BX640429">
    <property type="protein sequence ID" value="CAE37366.1"/>
    <property type="molecule type" value="Genomic_DNA"/>
</dbReference>
<dbReference type="RefSeq" id="WP_003809621.1">
    <property type="nucleotide sequence ID" value="NC_002928.3"/>
</dbReference>
<dbReference type="SMR" id="Q7W8R6"/>
<dbReference type="KEGG" id="bpa:BPP2066"/>
<dbReference type="HOGENOM" id="CLU_009422_4_1_4"/>
<dbReference type="Proteomes" id="UP000001421">
    <property type="component" value="Chromosome"/>
</dbReference>
<dbReference type="GO" id="GO:0005737">
    <property type="term" value="C:cytoplasm"/>
    <property type="evidence" value="ECO:0007669"/>
    <property type="project" value="UniProtKB-SubCell"/>
</dbReference>
<dbReference type="GO" id="GO:0008650">
    <property type="term" value="F:rRNA (uridine-2'-O-)-methyltransferase activity"/>
    <property type="evidence" value="ECO:0007669"/>
    <property type="project" value="UniProtKB-UniRule"/>
</dbReference>
<dbReference type="CDD" id="cd02440">
    <property type="entry name" value="AdoMet_MTases"/>
    <property type="match status" value="1"/>
</dbReference>
<dbReference type="FunFam" id="3.40.50.150:FF:000005">
    <property type="entry name" value="Ribosomal RNA large subunit methyltransferase E"/>
    <property type="match status" value="1"/>
</dbReference>
<dbReference type="Gene3D" id="3.40.50.150">
    <property type="entry name" value="Vaccinia Virus protein VP39"/>
    <property type="match status" value="1"/>
</dbReference>
<dbReference type="HAMAP" id="MF_01547">
    <property type="entry name" value="RNA_methyltr_E"/>
    <property type="match status" value="1"/>
</dbReference>
<dbReference type="InterPro" id="IPR050082">
    <property type="entry name" value="RNA_methyltr_RlmE"/>
</dbReference>
<dbReference type="InterPro" id="IPR002877">
    <property type="entry name" value="RNA_MeTrfase_FtsJ_dom"/>
</dbReference>
<dbReference type="InterPro" id="IPR015507">
    <property type="entry name" value="rRNA-MeTfrase_E"/>
</dbReference>
<dbReference type="InterPro" id="IPR029063">
    <property type="entry name" value="SAM-dependent_MTases_sf"/>
</dbReference>
<dbReference type="PANTHER" id="PTHR10920">
    <property type="entry name" value="RIBOSOMAL RNA METHYLTRANSFERASE"/>
    <property type="match status" value="1"/>
</dbReference>
<dbReference type="PANTHER" id="PTHR10920:SF18">
    <property type="entry name" value="RRNA METHYLTRANSFERASE 2, MITOCHONDRIAL"/>
    <property type="match status" value="1"/>
</dbReference>
<dbReference type="Pfam" id="PF01728">
    <property type="entry name" value="FtsJ"/>
    <property type="match status" value="1"/>
</dbReference>
<dbReference type="PIRSF" id="PIRSF005461">
    <property type="entry name" value="23S_rRNA_mtase"/>
    <property type="match status" value="1"/>
</dbReference>
<dbReference type="SUPFAM" id="SSF53335">
    <property type="entry name" value="S-adenosyl-L-methionine-dependent methyltransferases"/>
    <property type="match status" value="1"/>
</dbReference>
<protein>
    <recommendedName>
        <fullName evidence="1">Ribosomal RNA large subunit methyltransferase E</fullName>
        <ecNumber evidence="1">2.1.1.166</ecNumber>
    </recommendedName>
    <alternativeName>
        <fullName evidence="1">23S rRNA Um2552 methyltransferase</fullName>
    </alternativeName>
    <alternativeName>
        <fullName evidence="1">rRNA (uridine-2'-O-)-methyltransferase</fullName>
    </alternativeName>
</protein>
<name>RLME_BORPA</name>
<keyword id="KW-0963">Cytoplasm</keyword>
<keyword id="KW-0489">Methyltransferase</keyword>
<keyword id="KW-0698">rRNA processing</keyword>
<keyword id="KW-0949">S-adenosyl-L-methionine</keyword>
<keyword id="KW-0808">Transferase</keyword>
<comment type="function">
    <text evidence="1">Specifically methylates the uridine in position 2552 of 23S rRNA at the 2'-O position of the ribose in the fully assembled 50S ribosomal subunit.</text>
</comment>
<comment type="catalytic activity">
    <reaction evidence="1">
        <text>uridine(2552) in 23S rRNA + S-adenosyl-L-methionine = 2'-O-methyluridine(2552) in 23S rRNA + S-adenosyl-L-homocysteine + H(+)</text>
        <dbReference type="Rhea" id="RHEA:42720"/>
        <dbReference type="Rhea" id="RHEA-COMP:10202"/>
        <dbReference type="Rhea" id="RHEA-COMP:10203"/>
        <dbReference type="ChEBI" id="CHEBI:15378"/>
        <dbReference type="ChEBI" id="CHEBI:57856"/>
        <dbReference type="ChEBI" id="CHEBI:59789"/>
        <dbReference type="ChEBI" id="CHEBI:65315"/>
        <dbReference type="ChEBI" id="CHEBI:74478"/>
        <dbReference type="EC" id="2.1.1.166"/>
    </reaction>
</comment>
<comment type="subcellular location">
    <subcellularLocation>
        <location evidence="1">Cytoplasm</location>
    </subcellularLocation>
</comment>
<comment type="similarity">
    <text evidence="1">Belongs to the class I-like SAM-binding methyltransferase superfamily. RNA methyltransferase RlmE family.</text>
</comment>
<feature type="chain" id="PRO_0000155473" description="Ribosomal RNA large subunit methyltransferase E">
    <location>
        <begin position="1"/>
        <end position="210"/>
    </location>
</feature>
<feature type="region of interest" description="Disordered" evidence="2">
    <location>
        <begin position="191"/>
        <end position="210"/>
    </location>
</feature>
<feature type="compositionally biased region" description="Basic and acidic residues" evidence="2">
    <location>
        <begin position="191"/>
        <end position="200"/>
    </location>
</feature>
<feature type="active site" description="Proton acceptor" evidence="1">
    <location>
        <position position="166"/>
    </location>
</feature>
<feature type="binding site" evidence="1">
    <location>
        <position position="60"/>
    </location>
    <ligand>
        <name>S-adenosyl-L-methionine</name>
        <dbReference type="ChEBI" id="CHEBI:59789"/>
    </ligand>
</feature>
<feature type="binding site" evidence="1">
    <location>
        <position position="62"/>
    </location>
    <ligand>
        <name>S-adenosyl-L-methionine</name>
        <dbReference type="ChEBI" id="CHEBI:59789"/>
    </ligand>
</feature>
<feature type="binding site" evidence="1">
    <location>
        <position position="85"/>
    </location>
    <ligand>
        <name>S-adenosyl-L-methionine</name>
        <dbReference type="ChEBI" id="CHEBI:59789"/>
    </ligand>
</feature>
<feature type="binding site" evidence="1">
    <location>
        <position position="101"/>
    </location>
    <ligand>
        <name>S-adenosyl-L-methionine</name>
        <dbReference type="ChEBI" id="CHEBI:59789"/>
    </ligand>
</feature>
<feature type="binding site" evidence="1">
    <location>
        <position position="126"/>
    </location>
    <ligand>
        <name>S-adenosyl-L-methionine</name>
        <dbReference type="ChEBI" id="CHEBI:59789"/>
    </ligand>
</feature>